<protein>
    <recommendedName>
        <fullName evidence="1">Ribonuclease HII</fullName>
        <shortName evidence="1">RNase HII</shortName>
        <ecNumber evidence="1">3.1.26.4</ecNumber>
    </recommendedName>
</protein>
<reference key="1">
    <citation type="journal article" date="2011" name="J. Bacteriol.">
        <title>Comparative genomics of 28 Salmonella enterica isolates: evidence for CRISPR-mediated adaptive sublineage evolution.</title>
        <authorList>
            <person name="Fricke W.F."/>
            <person name="Mammel M.K."/>
            <person name="McDermott P.F."/>
            <person name="Tartera C."/>
            <person name="White D.G."/>
            <person name="Leclerc J.E."/>
            <person name="Ravel J."/>
            <person name="Cebula T.A."/>
        </authorList>
    </citation>
    <scope>NUCLEOTIDE SEQUENCE [LARGE SCALE GENOMIC DNA]</scope>
    <source>
        <strain>SL254</strain>
    </source>
</reference>
<name>RNH2_SALNS</name>
<proteinExistence type="inferred from homology"/>
<keyword id="KW-0963">Cytoplasm</keyword>
<keyword id="KW-0255">Endonuclease</keyword>
<keyword id="KW-0378">Hydrolase</keyword>
<keyword id="KW-0464">Manganese</keyword>
<keyword id="KW-0479">Metal-binding</keyword>
<keyword id="KW-0540">Nuclease</keyword>
<comment type="function">
    <text evidence="1">Endonuclease that specifically degrades the RNA of RNA-DNA hybrids.</text>
</comment>
<comment type="catalytic activity">
    <reaction evidence="1">
        <text>Endonucleolytic cleavage to 5'-phosphomonoester.</text>
        <dbReference type="EC" id="3.1.26.4"/>
    </reaction>
</comment>
<comment type="cofactor">
    <cofactor evidence="1">
        <name>Mn(2+)</name>
        <dbReference type="ChEBI" id="CHEBI:29035"/>
    </cofactor>
    <cofactor evidence="1">
        <name>Mg(2+)</name>
        <dbReference type="ChEBI" id="CHEBI:18420"/>
    </cofactor>
    <text evidence="1">Manganese or magnesium. Binds 1 divalent metal ion per monomer in the absence of substrate. May bind a second metal ion after substrate binding.</text>
</comment>
<comment type="subcellular location">
    <subcellularLocation>
        <location evidence="1">Cytoplasm</location>
    </subcellularLocation>
</comment>
<comment type="similarity">
    <text evidence="1">Belongs to the RNase HII family.</text>
</comment>
<organism>
    <name type="scientific">Salmonella newport (strain SL254)</name>
    <dbReference type="NCBI Taxonomy" id="423368"/>
    <lineage>
        <taxon>Bacteria</taxon>
        <taxon>Pseudomonadati</taxon>
        <taxon>Pseudomonadota</taxon>
        <taxon>Gammaproteobacteria</taxon>
        <taxon>Enterobacterales</taxon>
        <taxon>Enterobacteriaceae</taxon>
        <taxon>Salmonella</taxon>
    </lineage>
</organism>
<evidence type="ECO:0000255" key="1">
    <source>
        <dbReference type="HAMAP-Rule" id="MF_00052"/>
    </source>
</evidence>
<evidence type="ECO:0000255" key="2">
    <source>
        <dbReference type="PROSITE-ProRule" id="PRU01319"/>
    </source>
</evidence>
<feature type="chain" id="PRO_1000091653" description="Ribonuclease HII">
    <location>
        <begin position="1"/>
        <end position="198"/>
    </location>
</feature>
<feature type="domain" description="RNase H type-2" evidence="2">
    <location>
        <begin position="10"/>
        <end position="198"/>
    </location>
</feature>
<feature type="binding site" evidence="1">
    <location>
        <position position="16"/>
    </location>
    <ligand>
        <name>a divalent metal cation</name>
        <dbReference type="ChEBI" id="CHEBI:60240"/>
    </ligand>
</feature>
<feature type="binding site" evidence="1">
    <location>
        <position position="17"/>
    </location>
    <ligand>
        <name>a divalent metal cation</name>
        <dbReference type="ChEBI" id="CHEBI:60240"/>
    </ligand>
</feature>
<feature type="binding site" evidence="1">
    <location>
        <position position="108"/>
    </location>
    <ligand>
        <name>a divalent metal cation</name>
        <dbReference type="ChEBI" id="CHEBI:60240"/>
    </ligand>
</feature>
<dbReference type="EC" id="3.1.26.4" evidence="1"/>
<dbReference type="EMBL" id="CP001113">
    <property type="protein sequence ID" value="ACF61441.1"/>
    <property type="molecule type" value="Genomic_DNA"/>
</dbReference>
<dbReference type="RefSeq" id="WP_000569412.1">
    <property type="nucleotide sequence ID" value="NZ_CCMR01000003.1"/>
</dbReference>
<dbReference type="SMR" id="B4SV12"/>
<dbReference type="KEGG" id="see:SNSL254_A0252"/>
<dbReference type="HOGENOM" id="CLU_036532_3_2_6"/>
<dbReference type="Proteomes" id="UP000008824">
    <property type="component" value="Chromosome"/>
</dbReference>
<dbReference type="GO" id="GO:0005737">
    <property type="term" value="C:cytoplasm"/>
    <property type="evidence" value="ECO:0007669"/>
    <property type="project" value="UniProtKB-SubCell"/>
</dbReference>
<dbReference type="GO" id="GO:0032299">
    <property type="term" value="C:ribonuclease H2 complex"/>
    <property type="evidence" value="ECO:0007669"/>
    <property type="project" value="TreeGrafter"/>
</dbReference>
<dbReference type="GO" id="GO:0030145">
    <property type="term" value="F:manganese ion binding"/>
    <property type="evidence" value="ECO:0007669"/>
    <property type="project" value="UniProtKB-UniRule"/>
</dbReference>
<dbReference type="GO" id="GO:0003723">
    <property type="term" value="F:RNA binding"/>
    <property type="evidence" value="ECO:0007669"/>
    <property type="project" value="InterPro"/>
</dbReference>
<dbReference type="GO" id="GO:0004523">
    <property type="term" value="F:RNA-DNA hybrid ribonuclease activity"/>
    <property type="evidence" value="ECO:0007669"/>
    <property type="project" value="UniProtKB-UniRule"/>
</dbReference>
<dbReference type="GO" id="GO:0043137">
    <property type="term" value="P:DNA replication, removal of RNA primer"/>
    <property type="evidence" value="ECO:0007669"/>
    <property type="project" value="TreeGrafter"/>
</dbReference>
<dbReference type="GO" id="GO:0006298">
    <property type="term" value="P:mismatch repair"/>
    <property type="evidence" value="ECO:0007669"/>
    <property type="project" value="TreeGrafter"/>
</dbReference>
<dbReference type="CDD" id="cd07182">
    <property type="entry name" value="RNase_HII_bacteria_HII_like"/>
    <property type="match status" value="1"/>
</dbReference>
<dbReference type="FunFam" id="3.30.420.10:FF:000006">
    <property type="entry name" value="Ribonuclease HII"/>
    <property type="match status" value="1"/>
</dbReference>
<dbReference type="Gene3D" id="3.30.420.10">
    <property type="entry name" value="Ribonuclease H-like superfamily/Ribonuclease H"/>
    <property type="match status" value="1"/>
</dbReference>
<dbReference type="HAMAP" id="MF_00052_B">
    <property type="entry name" value="RNase_HII_B"/>
    <property type="match status" value="1"/>
</dbReference>
<dbReference type="InterPro" id="IPR022898">
    <property type="entry name" value="RNase_HII"/>
</dbReference>
<dbReference type="InterPro" id="IPR001352">
    <property type="entry name" value="RNase_HII/HIII"/>
</dbReference>
<dbReference type="InterPro" id="IPR024567">
    <property type="entry name" value="RNase_HII/HIII_dom"/>
</dbReference>
<dbReference type="InterPro" id="IPR012337">
    <property type="entry name" value="RNaseH-like_sf"/>
</dbReference>
<dbReference type="InterPro" id="IPR036397">
    <property type="entry name" value="RNaseH_sf"/>
</dbReference>
<dbReference type="NCBIfam" id="NF000594">
    <property type="entry name" value="PRK00015.1-1"/>
    <property type="match status" value="1"/>
</dbReference>
<dbReference type="NCBIfam" id="NF000595">
    <property type="entry name" value="PRK00015.1-3"/>
    <property type="match status" value="1"/>
</dbReference>
<dbReference type="NCBIfam" id="NF000596">
    <property type="entry name" value="PRK00015.1-4"/>
    <property type="match status" value="1"/>
</dbReference>
<dbReference type="PANTHER" id="PTHR10954">
    <property type="entry name" value="RIBONUCLEASE H2 SUBUNIT A"/>
    <property type="match status" value="1"/>
</dbReference>
<dbReference type="PANTHER" id="PTHR10954:SF18">
    <property type="entry name" value="RIBONUCLEASE HII"/>
    <property type="match status" value="1"/>
</dbReference>
<dbReference type="Pfam" id="PF01351">
    <property type="entry name" value="RNase_HII"/>
    <property type="match status" value="1"/>
</dbReference>
<dbReference type="SUPFAM" id="SSF53098">
    <property type="entry name" value="Ribonuclease H-like"/>
    <property type="match status" value="1"/>
</dbReference>
<dbReference type="PROSITE" id="PS51975">
    <property type="entry name" value="RNASE_H_2"/>
    <property type="match status" value="1"/>
</dbReference>
<gene>
    <name evidence="1" type="primary">rnhB</name>
    <name type="ordered locus">SNSL254_A0252</name>
</gene>
<accession>B4SV12</accession>
<sequence>MIEFVYPHTHLVAGVDEVGRGPLVGAVVTAAVILDPARPIVGLNDSKKLSEKRRLSLYDEIKEKALSWSLGRAEAHEIDELNILHATMLAMQRAVAGLHIAPEYVLIDGNRCPELPVPSMAVVKGDSRVAEISAASILAKVTRDAEMAALDIVFPQYGFAQHKGYPTAFHLEKLAQYGATAHHRRSFAPVKRALGLVS</sequence>